<keyword id="KW-1185">Reference proteome</keyword>
<keyword id="KW-0732">Signal</keyword>
<dbReference type="EMBL" id="AL662988">
    <property type="protein sequence ID" value="CAE04254.3"/>
    <property type="status" value="ALT_SEQ"/>
    <property type="molecule type" value="Genomic_DNA"/>
</dbReference>
<dbReference type="EMBL" id="AP008210">
    <property type="protein sequence ID" value="BAF15881.1"/>
    <property type="status" value="ALT_INIT"/>
    <property type="molecule type" value="Genomic_DNA"/>
</dbReference>
<dbReference type="EMBL" id="AP014960">
    <property type="status" value="NOT_ANNOTATED_CDS"/>
    <property type="molecule type" value="Genomic_DNA"/>
</dbReference>
<dbReference type="EMBL" id="AK109572">
    <property type="protein sequence ID" value="BAG98804.1"/>
    <property type="molecule type" value="mRNA"/>
</dbReference>
<dbReference type="RefSeq" id="XP_015635327.1">
    <property type="nucleotide sequence ID" value="XM_015779841.1"/>
</dbReference>
<dbReference type="FunCoup" id="Q0J9V6">
    <property type="interactions" value="1"/>
</dbReference>
<dbReference type="STRING" id="39947.Q0J9V6"/>
<dbReference type="PaxDb" id="39947-Q0J9V6"/>
<dbReference type="KEGG" id="dosa:Os04g0629400"/>
<dbReference type="eggNOG" id="ENOG502R721">
    <property type="taxonomic scope" value="Eukaryota"/>
</dbReference>
<dbReference type="HOGENOM" id="CLU_1329317_0_0_1"/>
<dbReference type="InParanoid" id="Q0J9V6"/>
<dbReference type="Proteomes" id="UP000000763">
    <property type="component" value="Chromosome 4"/>
</dbReference>
<dbReference type="Proteomes" id="UP000059680">
    <property type="component" value="Chromosome 4"/>
</dbReference>
<dbReference type="InterPro" id="IPR040277">
    <property type="entry name" value="Os04g0629400-like"/>
</dbReference>
<dbReference type="PANTHER" id="PTHR36036">
    <property type="entry name" value="PROLINE-RICH FAMILY PROTEIN"/>
    <property type="match status" value="1"/>
</dbReference>
<dbReference type="PANTHER" id="PTHR36036:SF1">
    <property type="entry name" value="PROLINE-RICH FAMILY PROTEIN"/>
    <property type="match status" value="1"/>
</dbReference>
<feature type="signal peptide" evidence="1">
    <location>
        <begin position="1"/>
        <end position="35"/>
    </location>
</feature>
<feature type="chain" id="PRO_0000394855" description="Uncharacterized protein Os04g0629400">
    <location>
        <begin position="36"/>
        <end position="122"/>
    </location>
</feature>
<feature type="region of interest" description="Disordered" evidence="2">
    <location>
        <begin position="55"/>
        <end position="83"/>
    </location>
</feature>
<reference key="1">
    <citation type="journal article" date="2002" name="Nature">
        <title>Sequence and analysis of rice chromosome 4.</title>
        <authorList>
            <person name="Feng Q."/>
            <person name="Zhang Y."/>
            <person name="Hao P."/>
            <person name="Wang S."/>
            <person name="Fu G."/>
            <person name="Huang Y."/>
            <person name="Li Y."/>
            <person name="Zhu J."/>
            <person name="Liu Y."/>
            <person name="Hu X."/>
            <person name="Jia P."/>
            <person name="Zhang Y."/>
            <person name="Zhao Q."/>
            <person name="Ying K."/>
            <person name="Yu S."/>
            <person name="Tang Y."/>
            <person name="Weng Q."/>
            <person name="Zhang L."/>
            <person name="Lu Y."/>
            <person name="Mu J."/>
            <person name="Lu Y."/>
            <person name="Zhang L.S."/>
            <person name="Yu Z."/>
            <person name="Fan D."/>
            <person name="Liu X."/>
            <person name="Lu T."/>
            <person name="Li C."/>
            <person name="Wu Y."/>
            <person name="Sun T."/>
            <person name="Lei H."/>
            <person name="Li T."/>
            <person name="Hu H."/>
            <person name="Guan J."/>
            <person name="Wu M."/>
            <person name="Zhang R."/>
            <person name="Zhou B."/>
            <person name="Chen Z."/>
            <person name="Chen L."/>
            <person name="Jin Z."/>
            <person name="Wang R."/>
            <person name="Yin H."/>
            <person name="Cai Z."/>
            <person name="Ren S."/>
            <person name="Lv G."/>
            <person name="Gu W."/>
            <person name="Zhu G."/>
            <person name="Tu Y."/>
            <person name="Jia J."/>
            <person name="Zhang Y."/>
            <person name="Chen J."/>
            <person name="Kang H."/>
            <person name="Chen X."/>
            <person name="Shao C."/>
            <person name="Sun Y."/>
            <person name="Hu Q."/>
            <person name="Zhang X."/>
            <person name="Zhang W."/>
            <person name="Wang L."/>
            <person name="Ding C."/>
            <person name="Sheng H."/>
            <person name="Gu J."/>
            <person name="Chen S."/>
            <person name="Ni L."/>
            <person name="Zhu F."/>
            <person name="Chen W."/>
            <person name="Lan L."/>
            <person name="Lai Y."/>
            <person name="Cheng Z."/>
            <person name="Gu M."/>
            <person name="Jiang J."/>
            <person name="Li J."/>
            <person name="Hong G."/>
            <person name="Xue Y."/>
            <person name="Han B."/>
        </authorList>
    </citation>
    <scope>NUCLEOTIDE SEQUENCE [LARGE SCALE GENOMIC DNA]</scope>
    <source>
        <strain>cv. Nipponbare</strain>
    </source>
</reference>
<reference key="2">
    <citation type="journal article" date="2005" name="Nature">
        <title>The map-based sequence of the rice genome.</title>
        <authorList>
            <consortium name="International rice genome sequencing project (IRGSP)"/>
        </authorList>
    </citation>
    <scope>NUCLEOTIDE SEQUENCE [LARGE SCALE GENOMIC DNA]</scope>
    <source>
        <strain>cv. Nipponbare</strain>
    </source>
</reference>
<reference key="3">
    <citation type="journal article" date="2008" name="Nucleic Acids Res.">
        <title>The rice annotation project database (RAP-DB): 2008 update.</title>
        <authorList>
            <consortium name="The rice annotation project (RAP)"/>
        </authorList>
    </citation>
    <scope>GENOME REANNOTATION</scope>
    <source>
        <strain>cv. Nipponbare</strain>
    </source>
</reference>
<reference key="4">
    <citation type="journal article" date="2013" name="Rice">
        <title>Improvement of the Oryza sativa Nipponbare reference genome using next generation sequence and optical map data.</title>
        <authorList>
            <person name="Kawahara Y."/>
            <person name="de la Bastide M."/>
            <person name="Hamilton J.P."/>
            <person name="Kanamori H."/>
            <person name="McCombie W.R."/>
            <person name="Ouyang S."/>
            <person name="Schwartz D.C."/>
            <person name="Tanaka T."/>
            <person name="Wu J."/>
            <person name="Zhou S."/>
            <person name="Childs K.L."/>
            <person name="Davidson R.M."/>
            <person name="Lin H."/>
            <person name="Quesada-Ocampo L."/>
            <person name="Vaillancourt B."/>
            <person name="Sakai H."/>
            <person name="Lee S.S."/>
            <person name="Kim J."/>
            <person name="Numa H."/>
            <person name="Itoh T."/>
            <person name="Buell C.R."/>
            <person name="Matsumoto T."/>
        </authorList>
    </citation>
    <scope>GENOME REANNOTATION</scope>
    <source>
        <strain>cv. Nipponbare</strain>
    </source>
</reference>
<reference key="5">
    <citation type="journal article" date="2003" name="Science">
        <title>Collection, mapping, and annotation of over 28,000 cDNA clones from japonica rice.</title>
        <authorList>
            <consortium name="The rice full-length cDNA consortium"/>
        </authorList>
    </citation>
    <scope>NUCLEOTIDE SEQUENCE [LARGE SCALE MRNA]</scope>
    <source>
        <strain>cv. Nipponbare</strain>
    </source>
</reference>
<reference key="6">
    <citation type="journal article" date="2009" name="Mol. Plant">
        <title>Comparative genomic study of the thioredoxin family in photosynthetic organisms with emphasis on Populus trichocarpa.</title>
        <authorList>
            <person name="Chibani K."/>
            <person name="Wingsle G."/>
            <person name="Jacquot J.P."/>
            <person name="Gelhaye E."/>
            <person name="Rouhier N."/>
        </authorList>
    </citation>
    <scope>GENE FAMILY</scope>
    <scope>NOMENCLATURE</scope>
</reference>
<sequence length="122" mass="12055">MCCYVGKATKIFLCLAAALIVVGLVLGFGLAHRTWGERKVQPDCRWPDCQLQPAYGGGGGGGDPLPATSGAGDTPPGVPLTEPAVAAFPGVASASSAAPPTASMPYLGPPSPFAVGLAPAHG</sequence>
<name>Y4294_ORYSJ</name>
<comment type="sequence caution" evidence="3">
    <conflict type="erroneous initiation">
        <sequence resource="EMBL-CDS" id="BAF15881"/>
    </conflict>
    <text>Extended N-terminus.</text>
</comment>
<comment type="sequence caution" evidence="3">
    <conflict type="erroneous gene model prediction">
        <sequence resource="EMBL-CDS" id="CAE04254"/>
    </conflict>
    <text>The predicted gene has been split into 2 genes: Os04g0629400 and Os04g0629500.</text>
</comment>
<evidence type="ECO:0000255" key="1"/>
<evidence type="ECO:0000256" key="2">
    <source>
        <dbReference type="SAM" id="MobiDB-lite"/>
    </source>
</evidence>
<evidence type="ECO:0000305" key="3"/>
<gene>
    <name type="ordered locus">Os04g0629400</name>
    <name type="ordered locus">LOC_Os04g53730</name>
    <name type="ORF">OSJNBa0089N06.15</name>
</gene>
<accession>Q0J9V6</accession>
<accession>B7F2F7</accession>
<accession>Q7XN67</accession>
<organism>
    <name type="scientific">Oryza sativa subsp. japonica</name>
    <name type="common">Rice</name>
    <dbReference type="NCBI Taxonomy" id="39947"/>
    <lineage>
        <taxon>Eukaryota</taxon>
        <taxon>Viridiplantae</taxon>
        <taxon>Streptophyta</taxon>
        <taxon>Embryophyta</taxon>
        <taxon>Tracheophyta</taxon>
        <taxon>Spermatophyta</taxon>
        <taxon>Magnoliopsida</taxon>
        <taxon>Liliopsida</taxon>
        <taxon>Poales</taxon>
        <taxon>Poaceae</taxon>
        <taxon>BOP clade</taxon>
        <taxon>Oryzoideae</taxon>
        <taxon>Oryzeae</taxon>
        <taxon>Oryzinae</taxon>
        <taxon>Oryza</taxon>
        <taxon>Oryza sativa</taxon>
    </lineage>
</organism>
<protein>
    <recommendedName>
        <fullName>Uncharacterized protein Os04g0629400</fullName>
    </recommendedName>
</protein>
<proteinExistence type="evidence at transcript level"/>